<dbReference type="EC" id="1.17.7.3" evidence="1"/>
<dbReference type="EMBL" id="CP000463">
    <property type="protein sequence ID" value="ABJ04143.1"/>
    <property type="molecule type" value="Genomic_DNA"/>
</dbReference>
<dbReference type="SMR" id="Q07V91"/>
<dbReference type="STRING" id="316055.RPE_0183"/>
<dbReference type="KEGG" id="rpe:RPE_0183"/>
<dbReference type="eggNOG" id="COG0821">
    <property type="taxonomic scope" value="Bacteria"/>
</dbReference>
<dbReference type="HOGENOM" id="CLU_042258_1_0_5"/>
<dbReference type="OrthoDB" id="9803214at2"/>
<dbReference type="UniPathway" id="UPA00056">
    <property type="reaction ID" value="UER00096"/>
</dbReference>
<dbReference type="GO" id="GO:0051539">
    <property type="term" value="F:4 iron, 4 sulfur cluster binding"/>
    <property type="evidence" value="ECO:0007669"/>
    <property type="project" value="UniProtKB-UniRule"/>
</dbReference>
<dbReference type="GO" id="GO:0046429">
    <property type="term" value="F:4-hydroxy-3-methylbut-2-en-1-yl diphosphate synthase activity (ferredoxin)"/>
    <property type="evidence" value="ECO:0007669"/>
    <property type="project" value="UniProtKB-UniRule"/>
</dbReference>
<dbReference type="GO" id="GO:0141197">
    <property type="term" value="F:4-hydroxy-3-methylbut-2-enyl-diphosphate synthase activity (flavodoxin)"/>
    <property type="evidence" value="ECO:0007669"/>
    <property type="project" value="UniProtKB-EC"/>
</dbReference>
<dbReference type="GO" id="GO:0005506">
    <property type="term" value="F:iron ion binding"/>
    <property type="evidence" value="ECO:0007669"/>
    <property type="project" value="InterPro"/>
</dbReference>
<dbReference type="GO" id="GO:0019288">
    <property type="term" value="P:isopentenyl diphosphate biosynthetic process, methylerythritol 4-phosphate pathway"/>
    <property type="evidence" value="ECO:0007669"/>
    <property type="project" value="UniProtKB-UniRule"/>
</dbReference>
<dbReference type="GO" id="GO:0016114">
    <property type="term" value="P:terpenoid biosynthetic process"/>
    <property type="evidence" value="ECO:0007669"/>
    <property type="project" value="InterPro"/>
</dbReference>
<dbReference type="FunFam" id="3.30.413.10:FF:000012">
    <property type="entry name" value="4-hydroxy-3-methylbut-2-en-1-yl diphosphate synthase (flavodoxin)"/>
    <property type="match status" value="1"/>
</dbReference>
<dbReference type="Gene3D" id="3.20.20.20">
    <property type="entry name" value="Dihydropteroate synthase-like"/>
    <property type="match status" value="1"/>
</dbReference>
<dbReference type="Gene3D" id="3.30.413.10">
    <property type="entry name" value="Sulfite Reductase Hemoprotein, domain 1"/>
    <property type="match status" value="1"/>
</dbReference>
<dbReference type="HAMAP" id="MF_00159">
    <property type="entry name" value="IspG"/>
    <property type="match status" value="1"/>
</dbReference>
<dbReference type="InterPro" id="IPR011005">
    <property type="entry name" value="Dihydropteroate_synth-like_sf"/>
</dbReference>
<dbReference type="InterPro" id="IPR016425">
    <property type="entry name" value="IspG_bac"/>
</dbReference>
<dbReference type="InterPro" id="IPR004588">
    <property type="entry name" value="IspG_bac-typ"/>
</dbReference>
<dbReference type="InterPro" id="IPR045854">
    <property type="entry name" value="NO2/SO3_Rdtase_4Fe4S_sf"/>
</dbReference>
<dbReference type="NCBIfam" id="TIGR00612">
    <property type="entry name" value="ispG_gcpE"/>
    <property type="match status" value="1"/>
</dbReference>
<dbReference type="NCBIfam" id="NF001540">
    <property type="entry name" value="PRK00366.1"/>
    <property type="match status" value="1"/>
</dbReference>
<dbReference type="PANTHER" id="PTHR30454">
    <property type="entry name" value="4-HYDROXY-3-METHYLBUT-2-EN-1-YL DIPHOSPHATE SYNTHASE"/>
    <property type="match status" value="1"/>
</dbReference>
<dbReference type="PANTHER" id="PTHR30454:SF0">
    <property type="entry name" value="4-HYDROXY-3-METHYLBUT-2-EN-1-YL DIPHOSPHATE SYNTHASE (FERREDOXIN), CHLOROPLASTIC"/>
    <property type="match status" value="1"/>
</dbReference>
<dbReference type="Pfam" id="PF04551">
    <property type="entry name" value="GcpE"/>
    <property type="match status" value="1"/>
</dbReference>
<dbReference type="PIRSF" id="PIRSF004640">
    <property type="entry name" value="IspG"/>
    <property type="match status" value="1"/>
</dbReference>
<comment type="function">
    <text evidence="1">Converts 2C-methyl-D-erythritol 2,4-cyclodiphosphate (ME-2,4cPP) into 1-hydroxy-2-methyl-2-(E)-butenyl 4-diphosphate.</text>
</comment>
<comment type="catalytic activity">
    <reaction evidence="1">
        <text>(2E)-4-hydroxy-3-methylbut-2-enyl diphosphate + oxidized [flavodoxin] + H2O + 2 H(+) = 2-C-methyl-D-erythritol 2,4-cyclic diphosphate + reduced [flavodoxin]</text>
        <dbReference type="Rhea" id="RHEA:43604"/>
        <dbReference type="Rhea" id="RHEA-COMP:10622"/>
        <dbReference type="Rhea" id="RHEA-COMP:10623"/>
        <dbReference type="ChEBI" id="CHEBI:15377"/>
        <dbReference type="ChEBI" id="CHEBI:15378"/>
        <dbReference type="ChEBI" id="CHEBI:57618"/>
        <dbReference type="ChEBI" id="CHEBI:58210"/>
        <dbReference type="ChEBI" id="CHEBI:58483"/>
        <dbReference type="ChEBI" id="CHEBI:128753"/>
        <dbReference type="EC" id="1.17.7.3"/>
    </reaction>
</comment>
<comment type="cofactor">
    <cofactor evidence="1">
        <name>[4Fe-4S] cluster</name>
        <dbReference type="ChEBI" id="CHEBI:49883"/>
    </cofactor>
    <text evidence="1">Binds 1 [4Fe-4S] cluster.</text>
</comment>
<comment type="pathway">
    <text evidence="1">Isoprenoid biosynthesis; isopentenyl diphosphate biosynthesis via DXP pathway; isopentenyl diphosphate from 1-deoxy-D-xylulose 5-phosphate: step 5/6.</text>
</comment>
<comment type="similarity">
    <text evidence="1">Belongs to the IspG family.</text>
</comment>
<proteinExistence type="inferred from homology"/>
<reference key="1">
    <citation type="submission" date="2006-09" db="EMBL/GenBank/DDBJ databases">
        <title>Complete sequence of Rhodopseudomonas palustris BisA53.</title>
        <authorList>
            <consortium name="US DOE Joint Genome Institute"/>
            <person name="Copeland A."/>
            <person name="Lucas S."/>
            <person name="Lapidus A."/>
            <person name="Barry K."/>
            <person name="Detter J.C."/>
            <person name="Glavina del Rio T."/>
            <person name="Hammon N."/>
            <person name="Israni S."/>
            <person name="Dalin E."/>
            <person name="Tice H."/>
            <person name="Pitluck S."/>
            <person name="Chain P."/>
            <person name="Malfatti S."/>
            <person name="Shin M."/>
            <person name="Vergez L."/>
            <person name="Schmutz J."/>
            <person name="Larimer F."/>
            <person name="Land M."/>
            <person name="Hauser L."/>
            <person name="Pelletier D.A."/>
            <person name="Kyrpides N."/>
            <person name="Kim E."/>
            <person name="Harwood C.S."/>
            <person name="Oda Y."/>
            <person name="Richardson P."/>
        </authorList>
    </citation>
    <scope>NUCLEOTIDE SEQUENCE [LARGE SCALE GENOMIC DNA]</scope>
    <source>
        <strain>BisA53</strain>
    </source>
</reference>
<keyword id="KW-0004">4Fe-4S</keyword>
<keyword id="KW-0408">Iron</keyword>
<keyword id="KW-0411">Iron-sulfur</keyword>
<keyword id="KW-0414">Isoprene biosynthesis</keyword>
<keyword id="KW-0479">Metal-binding</keyword>
<keyword id="KW-0560">Oxidoreductase</keyword>
<gene>
    <name evidence="1" type="primary">ispG</name>
    <name type="ordered locus">RPE_0183</name>
</gene>
<organism>
    <name type="scientific">Rhodopseudomonas palustris (strain BisA53)</name>
    <dbReference type="NCBI Taxonomy" id="316055"/>
    <lineage>
        <taxon>Bacteria</taxon>
        <taxon>Pseudomonadati</taxon>
        <taxon>Pseudomonadota</taxon>
        <taxon>Alphaproteobacteria</taxon>
        <taxon>Hyphomicrobiales</taxon>
        <taxon>Nitrobacteraceae</taxon>
        <taxon>Rhodopseudomonas</taxon>
    </lineage>
</organism>
<accession>Q07V91</accession>
<sequence length="426" mass="45376">MNKLENPLQNDIAGPAPRHRTTQVMVGQVAVGGGAPIVVQSMTNTDTADIQGTIDQVARLSQAGSEMVRITVDRDEAAAAVPHIRDGLRKRGITTPLIGDFHYIGHKLLADYPACAEALDKYRINPGNVGFKNKRDTQFTDIVEIALKNDKAVRIGANWGSLDQELLTKLMDENAVSATPRDVRAVTREAMVQSALLSAARAEEIGLPKTKMILSAKVSSVQDLIAVYQDLASRSDYAIHLGLTEAGMGSKGIVASSAALGILLQQGIGDTIRISLTPEPGGDRTLEVQVAQELLQTMGFRTFVPLVAACPGCGRTTSTTFQELARSIQDFIRVEMPAWKTRYPGVENLNVAVMGCIVNGPGESKHANIGISLPGTGETPAAPVFVDGEKVKTLRGPTIAAEFKAMVIDYIEHKYGAGAPAVTAAE</sequence>
<name>ISPG_RHOP5</name>
<feature type="chain" id="PRO_1000011509" description="4-hydroxy-3-methylbut-2-en-1-yl diphosphate synthase (flavodoxin)">
    <location>
        <begin position="1"/>
        <end position="426"/>
    </location>
</feature>
<feature type="binding site" evidence="1">
    <location>
        <position position="310"/>
    </location>
    <ligand>
        <name>[4Fe-4S] cluster</name>
        <dbReference type="ChEBI" id="CHEBI:49883"/>
    </ligand>
</feature>
<feature type="binding site" evidence="1">
    <location>
        <position position="313"/>
    </location>
    <ligand>
        <name>[4Fe-4S] cluster</name>
        <dbReference type="ChEBI" id="CHEBI:49883"/>
    </ligand>
</feature>
<feature type="binding site" evidence="1">
    <location>
        <position position="356"/>
    </location>
    <ligand>
        <name>[4Fe-4S] cluster</name>
        <dbReference type="ChEBI" id="CHEBI:49883"/>
    </ligand>
</feature>
<feature type="binding site" evidence="1">
    <location>
        <position position="363"/>
    </location>
    <ligand>
        <name>[4Fe-4S] cluster</name>
        <dbReference type="ChEBI" id="CHEBI:49883"/>
    </ligand>
</feature>
<evidence type="ECO:0000255" key="1">
    <source>
        <dbReference type="HAMAP-Rule" id="MF_00159"/>
    </source>
</evidence>
<protein>
    <recommendedName>
        <fullName evidence="1">4-hydroxy-3-methylbut-2-en-1-yl diphosphate synthase (flavodoxin)</fullName>
        <ecNumber evidence="1">1.17.7.3</ecNumber>
    </recommendedName>
    <alternativeName>
        <fullName evidence="1">1-hydroxy-2-methyl-2-(E)-butenyl 4-diphosphate synthase</fullName>
    </alternativeName>
</protein>